<proteinExistence type="inferred from homology"/>
<organism>
    <name type="scientific">Aedes aegypti</name>
    <name type="common">Yellowfever mosquito</name>
    <name type="synonym">Culex aegypti</name>
    <dbReference type="NCBI Taxonomy" id="7159"/>
    <lineage>
        <taxon>Eukaryota</taxon>
        <taxon>Metazoa</taxon>
        <taxon>Ecdysozoa</taxon>
        <taxon>Arthropoda</taxon>
        <taxon>Hexapoda</taxon>
        <taxon>Insecta</taxon>
        <taxon>Pterygota</taxon>
        <taxon>Neoptera</taxon>
        <taxon>Endopterygota</taxon>
        <taxon>Diptera</taxon>
        <taxon>Nematocera</taxon>
        <taxon>Culicoidea</taxon>
        <taxon>Culicidae</taxon>
        <taxon>Culicinae</taxon>
        <taxon>Aedini</taxon>
        <taxon>Aedes</taxon>
        <taxon>Stegomyia</taxon>
    </lineage>
</organism>
<comment type="function">
    <text evidence="1">Required for association of the cohesin complex with chromatin during interphase. Plays a role in sister chromatid cohesion and normal progression through prometaphase (By similarity).</text>
</comment>
<comment type="subunit">
    <text evidence="1">Component of the cohesin loading complex.</text>
</comment>
<comment type="subcellular location">
    <subcellularLocation>
        <location evidence="1">Nucleus</location>
        <location evidence="1">Nucleoplasm</location>
    </subcellularLocation>
    <text evidence="1">Binds to chromatin from the end of mitosis until prophase.</text>
</comment>
<comment type="similarity">
    <text evidence="2">Belongs to the SCC4/mau-2 family.</text>
</comment>
<gene>
    <name type="ORF">AAEL011819</name>
</gene>
<reference key="1">
    <citation type="journal article" date="2007" name="Science">
        <title>Genome sequence of Aedes aegypti, a major arbovirus vector.</title>
        <authorList>
            <person name="Nene V."/>
            <person name="Wortman J.R."/>
            <person name="Lawson D."/>
            <person name="Haas B.J."/>
            <person name="Kodira C.D."/>
            <person name="Tu Z.J."/>
            <person name="Loftus B.J."/>
            <person name="Xi Z."/>
            <person name="Megy K."/>
            <person name="Grabherr M."/>
            <person name="Ren Q."/>
            <person name="Zdobnov E.M."/>
            <person name="Lobo N.F."/>
            <person name="Campbell K.S."/>
            <person name="Brown S.E."/>
            <person name="Bonaldo M.F."/>
            <person name="Zhu J."/>
            <person name="Sinkins S.P."/>
            <person name="Hogenkamp D.G."/>
            <person name="Amedeo P."/>
            <person name="Arensburger P."/>
            <person name="Atkinson P.W."/>
            <person name="Bidwell S.L."/>
            <person name="Biedler J."/>
            <person name="Birney E."/>
            <person name="Bruggner R.V."/>
            <person name="Costas J."/>
            <person name="Coy M.R."/>
            <person name="Crabtree J."/>
            <person name="Crawford M."/>
            <person name="DeBruyn B."/>
            <person name="DeCaprio D."/>
            <person name="Eiglmeier K."/>
            <person name="Eisenstadt E."/>
            <person name="El-Dorry H."/>
            <person name="Gelbart W.M."/>
            <person name="Gomes S.L."/>
            <person name="Hammond M."/>
            <person name="Hannick L.I."/>
            <person name="Hogan J.R."/>
            <person name="Holmes M.H."/>
            <person name="Jaffe D."/>
            <person name="Johnston S.J."/>
            <person name="Kennedy R.C."/>
            <person name="Koo H."/>
            <person name="Kravitz S."/>
            <person name="Kriventseva E.V."/>
            <person name="Kulp D."/>
            <person name="Labutti K."/>
            <person name="Lee E."/>
            <person name="Li S."/>
            <person name="Lovin D.D."/>
            <person name="Mao C."/>
            <person name="Mauceli E."/>
            <person name="Menck C.F."/>
            <person name="Miller J.R."/>
            <person name="Montgomery P."/>
            <person name="Mori A."/>
            <person name="Nascimento A.L."/>
            <person name="Naveira H.F."/>
            <person name="Nusbaum C."/>
            <person name="O'Leary S.B."/>
            <person name="Orvis J."/>
            <person name="Pertea M."/>
            <person name="Quesneville H."/>
            <person name="Reidenbach K.R."/>
            <person name="Rogers Y.-H.C."/>
            <person name="Roth C.W."/>
            <person name="Schneider J.R."/>
            <person name="Schatz M."/>
            <person name="Shumway M."/>
            <person name="Stanke M."/>
            <person name="Stinson E.O."/>
            <person name="Tubio J.M.C."/>
            <person name="Vanzee J.P."/>
            <person name="Verjovski-Almeida S."/>
            <person name="Werner D."/>
            <person name="White O.R."/>
            <person name="Wyder S."/>
            <person name="Zeng Q."/>
            <person name="Zhao Q."/>
            <person name="Zhao Y."/>
            <person name="Hill C.A."/>
            <person name="Raikhel A.S."/>
            <person name="Soares M.B."/>
            <person name="Knudson D.L."/>
            <person name="Lee N.H."/>
            <person name="Galagan J."/>
            <person name="Salzberg S.L."/>
            <person name="Paulsen I.T."/>
            <person name="Dimopoulos G."/>
            <person name="Collins F.H."/>
            <person name="Bruce B."/>
            <person name="Fraser-Liggett C.M."/>
            <person name="Severson D.W."/>
        </authorList>
    </citation>
    <scope>NUCLEOTIDE SEQUENCE [LARGE SCALE GENOMIC DNA]</scope>
    <source>
        <strain>LVPib12</strain>
    </source>
</reference>
<sequence length="620" mass="70629">MTSSQDACYISLLGLAEYFRTSSPPNIKKCIQCLQALFTFKPPLKVEARTHLQLGQILMAYTKNTDLARNHLEQAWMLSENINNFDDVKFDTASLLAQLYQQQEQSSLAKPVLRKAIELSQHNVYWHCKLLFQLAQTHATDKEYALASELLAVGVESTDETNATYLKTLFLLSRAMIMMIERKTGDVLTILNQAGTMIDNAVQNIHLKEYLKVFFYVLQVCHYLQLGQVKTVKTSLKQLQQSIQTIMAPNWPADEQIFGQSNTEMFMWLPKEQLYVLVYLVTVSHSMMAGYMDKAQKYTEKALTQIEKLKSQENKPILAVFQIILLEHIIMCRLVMGNKSLAIKEIALAKDVCLSSSNKFLLKKHSAQLHCLLGLYAMSASYFEHAERQFFACINDTTERDLKLFANLNLAIVYLRMKREQELRQILDQVQQENSQCSNSQALMGSFYYVQGLNAFHKSSFHEAKRFLRETLKMANAEDLNRLTSCSLVLLSHVFLSIGNSKESMNMVTPAMQLASKIPDIHVQLWGSAILKDLHRMLKEPALETEAYNNHCNFSQNLIADQMKCTKFPEHTLISWVQGDPPLPMLSQEILEAPPAATIQQQSATVVRLSGQPGQQVIYQ</sequence>
<keyword id="KW-0131">Cell cycle</keyword>
<keyword id="KW-0132">Cell division</keyword>
<keyword id="KW-0159">Chromosome partition</keyword>
<keyword id="KW-0498">Mitosis</keyword>
<keyword id="KW-0539">Nucleus</keyword>
<keyword id="KW-1185">Reference proteome</keyword>
<keyword id="KW-0677">Repeat</keyword>
<keyword id="KW-0802">TPR repeat</keyword>
<accession>Q16NZ8</accession>
<dbReference type="EMBL" id="CH477801">
    <property type="protein sequence ID" value="EAT36076.1"/>
    <property type="molecule type" value="Genomic_DNA"/>
</dbReference>
<dbReference type="RefSeq" id="XP_001661928.1">
    <property type="nucleotide sequence ID" value="XM_001661878.1"/>
</dbReference>
<dbReference type="FunCoup" id="Q16NZ8">
    <property type="interactions" value="2680"/>
</dbReference>
<dbReference type="STRING" id="7159.Q16NZ8"/>
<dbReference type="PaxDb" id="7159-AAEL011819-PA"/>
<dbReference type="GeneID" id="5575408"/>
<dbReference type="KEGG" id="aag:5575408"/>
<dbReference type="CTD" id="23383"/>
<dbReference type="VEuPathDB" id="VectorBase:AAEL011819"/>
<dbReference type="eggNOG" id="KOG2300">
    <property type="taxonomic scope" value="Eukaryota"/>
</dbReference>
<dbReference type="HOGENOM" id="CLU_030238_0_0_1"/>
<dbReference type="InParanoid" id="Q16NZ8"/>
<dbReference type="OMA" id="QDAWYLS"/>
<dbReference type="OrthoDB" id="5565328at2759"/>
<dbReference type="PhylomeDB" id="Q16NZ8"/>
<dbReference type="Proteomes" id="UP000008820">
    <property type="component" value="Unassembled WGS sequence"/>
</dbReference>
<dbReference type="Proteomes" id="UP000682892">
    <property type="component" value="Unassembled WGS sequence"/>
</dbReference>
<dbReference type="GO" id="GO:0000785">
    <property type="term" value="C:chromatin"/>
    <property type="evidence" value="ECO:0000250"/>
    <property type="project" value="UniProtKB"/>
</dbReference>
<dbReference type="GO" id="GO:0005654">
    <property type="term" value="C:nucleoplasm"/>
    <property type="evidence" value="ECO:0000250"/>
    <property type="project" value="UniProtKB"/>
</dbReference>
<dbReference type="GO" id="GO:0005634">
    <property type="term" value="C:nucleus"/>
    <property type="evidence" value="ECO:0000250"/>
    <property type="project" value="UniProtKB"/>
</dbReference>
<dbReference type="GO" id="GO:0032116">
    <property type="term" value="C:SMC loading complex"/>
    <property type="evidence" value="ECO:0000250"/>
    <property type="project" value="UniProtKB"/>
</dbReference>
<dbReference type="GO" id="GO:0051301">
    <property type="term" value="P:cell division"/>
    <property type="evidence" value="ECO:0007669"/>
    <property type="project" value="UniProtKB-KW"/>
</dbReference>
<dbReference type="GO" id="GO:0007059">
    <property type="term" value="P:chromosome segregation"/>
    <property type="evidence" value="ECO:0007669"/>
    <property type="project" value="UniProtKB-KW"/>
</dbReference>
<dbReference type="GO" id="GO:0034088">
    <property type="term" value="P:maintenance of mitotic sister chromatid cohesion"/>
    <property type="evidence" value="ECO:0000250"/>
    <property type="project" value="UniProtKB"/>
</dbReference>
<dbReference type="FunFam" id="1.25.40.10:FF:000373">
    <property type="entry name" value="MAU2 chromatid cohesion factor homolog"/>
    <property type="match status" value="1"/>
</dbReference>
<dbReference type="FunFam" id="1.25.40.10:FF:000915">
    <property type="entry name" value="MAU2 chromatid cohesion factor homolog"/>
    <property type="match status" value="1"/>
</dbReference>
<dbReference type="Gene3D" id="1.25.40.10">
    <property type="entry name" value="Tetratricopeptide repeat domain"/>
    <property type="match status" value="2"/>
</dbReference>
<dbReference type="InterPro" id="IPR019440">
    <property type="entry name" value="MAU2"/>
</dbReference>
<dbReference type="InterPro" id="IPR011990">
    <property type="entry name" value="TPR-like_helical_dom_sf"/>
</dbReference>
<dbReference type="PANTHER" id="PTHR21394">
    <property type="entry name" value="MAU2 CHROMATID COHESION FACTOR HOMOLOG"/>
    <property type="match status" value="1"/>
</dbReference>
<dbReference type="Pfam" id="PF10345">
    <property type="entry name" value="Cohesin_load"/>
    <property type="match status" value="1"/>
</dbReference>
<dbReference type="SUPFAM" id="SSF48452">
    <property type="entry name" value="TPR-like"/>
    <property type="match status" value="2"/>
</dbReference>
<protein>
    <recommendedName>
        <fullName>MAU2 chromatid cohesion factor homolog</fullName>
    </recommendedName>
    <alternativeName>
        <fullName>Cohesin loading complex subunit SCC4 homolog</fullName>
    </alternativeName>
</protein>
<feature type="chain" id="PRO_0000382727" description="MAU2 chromatid cohesion factor homolog">
    <location>
        <begin position="1"/>
        <end position="620"/>
    </location>
</feature>
<feature type="repeat" description="TPR 1">
    <location>
        <begin position="90"/>
        <end position="123"/>
    </location>
</feature>
<feature type="repeat" description="TPR 2">
    <location>
        <begin position="445"/>
        <end position="478"/>
    </location>
</feature>
<feature type="repeat" description="TPR 3">
    <location>
        <begin position="485"/>
        <end position="518"/>
    </location>
</feature>
<evidence type="ECO:0000250" key="1"/>
<evidence type="ECO:0000305" key="2"/>
<name>SCC4_AEDAE</name>